<keyword id="KW-0450">Lipoyl</keyword>
<proteinExistence type="inferred from homology"/>
<accession>A4TIA6</accession>
<dbReference type="EMBL" id="CP000668">
    <property type="protein sequence ID" value="ABP39018.1"/>
    <property type="molecule type" value="Genomic_DNA"/>
</dbReference>
<dbReference type="RefSeq" id="WP_002209948.1">
    <property type="nucleotide sequence ID" value="NZ_CP009715.1"/>
</dbReference>
<dbReference type="SMR" id="A4TIA6"/>
<dbReference type="GeneID" id="57973734"/>
<dbReference type="KEGG" id="ypp:YPDSF_0608"/>
<dbReference type="PATRIC" id="fig|386656.14.peg.1927"/>
<dbReference type="GO" id="GO:0005829">
    <property type="term" value="C:cytosol"/>
    <property type="evidence" value="ECO:0007669"/>
    <property type="project" value="TreeGrafter"/>
</dbReference>
<dbReference type="GO" id="GO:0005960">
    <property type="term" value="C:glycine cleavage complex"/>
    <property type="evidence" value="ECO:0007669"/>
    <property type="project" value="InterPro"/>
</dbReference>
<dbReference type="GO" id="GO:0019464">
    <property type="term" value="P:glycine decarboxylation via glycine cleavage system"/>
    <property type="evidence" value="ECO:0007669"/>
    <property type="project" value="UniProtKB-UniRule"/>
</dbReference>
<dbReference type="CDD" id="cd06848">
    <property type="entry name" value="GCS_H"/>
    <property type="match status" value="1"/>
</dbReference>
<dbReference type="FunFam" id="2.40.50.100:FF:000011">
    <property type="entry name" value="Glycine cleavage system H protein"/>
    <property type="match status" value="1"/>
</dbReference>
<dbReference type="Gene3D" id="2.40.50.100">
    <property type="match status" value="1"/>
</dbReference>
<dbReference type="HAMAP" id="MF_00272">
    <property type="entry name" value="GcvH"/>
    <property type="match status" value="1"/>
</dbReference>
<dbReference type="InterPro" id="IPR003016">
    <property type="entry name" value="2-oxoA_DH_lipoyl-BS"/>
</dbReference>
<dbReference type="InterPro" id="IPR000089">
    <property type="entry name" value="Biotin_lipoyl"/>
</dbReference>
<dbReference type="InterPro" id="IPR002930">
    <property type="entry name" value="GCV_H"/>
</dbReference>
<dbReference type="InterPro" id="IPR033753">
    <property type="entry name" value="GCV_H/Fam206"/>
</dbReference>
<dbReference type="InterPro" id="IPR017453">
    <property type="entry name" value="GCV_H_sub"/>
</dbReference>
<dbReference type="InterPro" id="IPR011053">
    <property type="entry name" value="Single_hybrid_motif"/>
</dbReference>
<dbReference type="NCBIfam" id="TIGR00527">
    <property type="entry name" value="gcvH"/>
    <property type="match status" value="1"/>
</dbReference>
<dbReference type="NCBIfam" id="NF002270">
    <property type="entry name" value="PRK01202.1"/>
    <property type="match status" value="1"/>
</dbReference>
<dbReference type="PANTHER" id="PTHR11715">
    <property type="entry name" value="GLYCINE CLEAVAGE SYSTEM H PROTEIN"/>
    <property type="match status" value="1"/>
</dbReference>
<dbReference type="PANTHER" id="PTHR11715:SF3">
    <property type="entry name" value="GLYCINE CLEAVAGE SYSTEM H PROTEIN-RELATED"/>
    <property type="match status" value="1"/>
</dbReference>
<dbReference type="Pfam" id="PF01597">
    <property type="entry name" value="GCV_H"/>
    <property type="match status" value="1"/>
</dbReference>
<dbReference type="SUPFAM" id="SSF51230">
    <property type="entry name" value="Single hybrid motif"/>
    <property type="match status" value="1"/>
</dbReference>
<dbReference type="PROSITE" id="PS50968">
    <property type="entry name" value="BIOTINYL_LIPOYL"/>
    <property type="match status" value="1"/>
</dbReference>
<dbReference type="PROSITE" id="PS00189">
    <property type="entry name" value="LIPOYL"/>
    <property type="match status" value="1"/>
</dbReference>
<feature type="chain" id="PRO_0000302469" description="Glycine cleavage system H protein">
    <location>
        <begin position="1"/>
        <end position="128"/>
    </location>
</feature>
<feature type="domain" description="Lipoyl-binding" evidence="2">
    <location>
        <begin position="24"/>
        <end position="106"/>
    </location>
</feature>
<feature type="modified residue" description="N6-lipoyllysine" evidence="1">
    <location>
        <position position="65"/>
    </location>
</feature>
<name>GCSH_YERPP</name>
<evidence type="ECO:0000255" key="1">
    <source>
        <dbReference type="HAMAP-Rule" id="MF_00272"/>
    </source>
</evidence>
<evidence type="ECO:0000255" key="2">
    <source>
        <dbReference type="PROSITE-ProRule" id="PRU01066"/>
    </source>
</evidence>
<comment type="function">
    <text evidence="1">The glycine cleavage system catalyzes the degradation of glycine. The H protein shuttles the methylamine group of glycine from the P protein to the T protein.</text>
</comment>
<comment type="cofactor">
    <cofactor evidence="1">
        <name>(R)-lipoate</name>
        <dbReference type="ChEBI" id="CHEBI:83088"/>
    </cofactor>
    <text evidence="1">Binds 1 lipoyl cofactor covalently.</text>
</comment>
<comment type="subunit">
    <text evidence="1">The glycine cleavage system is composed of four proteins: P, T, L and H.</text>
</comment>
<comment type="similarity">
    <text evidence="1">Belongs to the GcvH family.</text>
</comment>
<sequence length="128" mass="13581">MSNVPTELKYALSHEWVRADGDGVYSVGITEHAQELLGDMVFVDLPEVGSDVSAGSDCAVAESVKAASDIYAPISGEIVAVNTELENSPELVNSAPYTDGWLFSIKAADESELDNLLDADAYLAAIEE</sequence>
<gene>
    <name evidence="1" type="primary">gcvH</name>
    <name type="ordered locus">YPDSF_0608</name>
</gene>
<reference key="1">
    <citation type="submission" date="2007-02" db="EMBL/GenBank/DDBJ databases">
        <title>Complete sequence of chromosome of Yersinia pestis Pestoides F.</title>
        <authorList>
            <consortium name="US DOE Joint Genome Institute"/>
            <person name="Copeland A."/>
            <person name="Lucas S."/>
            <person name="Lapidus A."/>
            <person name="Barry K."/>
            <person name="Detter J.C."/>
            <person name="Glavina del Rio T."/>
            <person name="Hammon N."/>
            <person name="Israni S."/>
            <person name="Dalin E."/>
            <person name="Tice H."/>
            <person name="Pitluck S."/>
            <person name="Di Bartolo G."/>
            <person name="Chain P."/>
            <person name="Malfatti S."/>
            <person name="Shin M."/>
            <person name="Vergez L."/>
            <person name="Schmutz J."/>
            <person name="Larimer F."/>
            <person name="Land M."/>
            <person name="Hauser L."/>
            <person name="Worsham P."/>
            <person name="Chu M."/>
            <person name="Bearden S."/>
            <person name="Garcia E."/>
            <person name="Richardson P."/>
        </authorList>
    </citation>
    <scope>NUCLEOTIDE SEQUENCE [LARGE SCALE GENOMIC DNA]</scope>
    <source>
        <strain>Pestoides F</strain>
    </source>
</reference>
<organism>
    <name type="scientific">Yersinia pestis (strain Pestoides F)</name>
    <dbReference type="NCBI Taxonomy" id="386656"/>
    <lineage>
        <taxon>Bacteria</taxon>
        <taxon>Pseudomonadati</taxon>
        <taxon>Pseudomonadota</taxon>
        <taxon>Gammaproteobacteria</taxon>
        <taxon>Enterobacterales</taxon>
        <taxon>Yersiniaceae</taxon>
        <taxon>Yersinia</taxon>
    </lineage>
</organism>
<protein>
    <recommendedName>
        <fullName evidence="1">Glycine cleavage system H protein</fullName>
    </recommendedName>
</protein>